<protein>
    <recommendedName>
        <fullName evidence="1">Large ribosomal subunit protein bL28</fullName>
    </recommendedName>
    <alternativeName>
        <fullName evidence="2">50S ribosomal protein L28</fullName>
    </alternativeName>
</protein>
<comment type="similarity">
    <text evidence="1">Belongs to the bacterial ribosomal protein bL28 family.</text>
</comment>
<feature type="chain" id="PRO_0000178451" description="Large ribosomal subunit protein bL28">
    <location>
        <begin position="1"/>
        <end position="79"/>
    </location>
</feature>
<evidence type="ECO:0000255" key="1">
    <source>
        <dbReference type="HAMAP-Rule" id="MF_00373"/>
    </source>
</evidence>
<evidence type="ECO:0000305" key="2"/>
<name>RL28_BLOFL</name>
<accession>Q7VRK1</accession>
<organism>
    <name type="scientific">Blochmanniella floridana</name>
    <dbReference type="NCBI Taxonomy" id="203907"/>
    <lineage>
        <taxon>Bacteria</taxon>
        <taxon>Pseudomonadati</taxon>
        <taxon>Pseudomonadota</taxon>
        <taxon>Gammaproteobacteria</taxon>
        <taxon>Enterobacterales</taxon>
        <taxon>Enterobacteriaceae</taxon>
        <taxon>ant endosymbionts</taxon>
        <taxon>Candidatus Blochmanniella</taxon>
    </lineage>
</organism>
<dbReference type="EMBL" id="BX248583">
    <property type="protein sequence ID" value="CAD83287.1"/>
    <property type="molecule type" value="Genomic_DNA"/>
</dbReference>
<dbReference type="SMR" id="Q7VRK1"/>
<dbReference type="STRING" id="203907.Bfl612"/>
<dbReference type="KEGG" id="bfl:Bfl612"/>
<dbReference type="eggNOG" id="COG0227">
    <property type="taxonomic scope" value="Bacteria"/>
</dbReference>
<dbReference type="HOGENOM" id="CLU_064548_3_1_6"/>
<dbReference type="OrthoDB" id="9805609at2"/>
<dbReference type="Proteomes" id="UP000002192">
    <property type="component" value="Chromosome"/>
</dbReference>
<dbReference type="GO" id="GO:1990904">
    <property type="term" value="C:ribonucleoprotein complex"/>
    <property type="evidence" value="ECO:0007669"/>
    <property type="project" value="UniProtKB-KW"/>
</dbReference>
<dbReference type="GO" id="GO:0005840">
    <property type="term" value="C:ribosome"/>
    <property type="evidence" value="ECO:0007669"/>
    <property type="project" value="UniProtKB-KW"/>
</dbReference>
<dbReference type="GO" id="GO:0003735">
    <property type="term" value="F:structural constituent of ribosome"/>
    <property type="evidence" value="ECO:0007669"/>
    <property type="project" value="InterPro"/>
</dbReference>
<dbReference type="GO" id="GO:0006412">
    <property type="term" value="P:translation"/>
    <property type="evidence" value="ECO:0007669"/>
    <property type="project" value="UniProtKB-UniRule"/>
</dbReference>
<dbReference type="FunFam" id="2.30.170.40:FF:000001">
    <property type="entry name" value="50S ribosomal protein L28"/>
    <property type="match status" value="1"/>
</dbReference>
<dbReference type="Gene3D" id="2.30.170.40">
    <property type="entry name" value="Ribosomal protein L28/L24"/>
    <property type="match status" value="1"/>
</dbReference>
<dbReference type="HAMAP" id="MF_00373">
    <property type="entry name" value="Ribosomal_bL28"/>
    <property type="match status" value="1"/>
</dbReference>
<dbReference type="InterPro" id="IPR050096">
    <property type="entry name" value="Bacterial_rp_bL28"/>
</dbReference>
<dbReference type="InterPro" id="IPR026569">
    <property type="entry name" value="Ribosomal_bL28"/>
</dbReference>
<dbReference type="InterPro" id="IPR034704">
    <property type="entry name" value="Ribosomal_bL28/bL31-like_sf"/>
</dbReference>
<dbReference type="InterPro" id="IPR001383">
    <property type="entry name" value="Ribosomal_bL28_bact-type"/>
</dbReference>
<dbReference type="InterPro" id="IPR037147">
    <property type="entry name" value="Ribosomal_bL28_sf"/>
</dbReference>
<dbReference type="NCBIfam" id="TIGR00009">
    <property type="entry name" value="L28"/>
    <property type="match status" value="1"/>
</dbReference>
<dbReference type="PANTHER" id="PTHR39080">
    <property type="entry name" value="50S RIBOSOMAL PROTEIN L28"/>
    <property type="match status" value="1"/>
</dbReference>
<dbReference type="PANTHER" id="PTHR39080:SF1">
    <property type="entry name" value="LARGE RIBOSOMAL SUBUNIT PROTEIN BL28A"/>
    <property type="match status" value="1"/>
</dbReference>
<dbReference type="Pfam" id="PF00830">
    <property type="entry name" value="Ribosomal_L28"/>
    <property type="match status" value="1"/>
</dbReference>
<dbReference type="SUPFAM" id="SSF143800">
    <property type="entry name" value="L28p-like"/>
    <property type="match status" value="1"/>
</dbReference>
<reference key="1">
    <citation type="journal article" date="2003" name="Proc. Natl. Acad. Sci. U.S.A.">
        <title>The genome sequence of Blochmannia floridanus: comparative analysis of reduced genomes.</title>
        <authorList>
            <person name="Gil R."/>
            <person name="Silva F.J."/>
            <person name="Zientz E."/>
            <person name="Delmotte F."/>
            <person name="Gonzalez-Candelas F."/>
            <person name="Latorre A."/>
            <person name="Rausell C."/>
            <person name="Kamerbeek J."/>
            <person name="Gadau J."/>
            <person name="Hoelldobler B."/>
            <person name="van Ham R.C.H.J."/>
            <person name="Gross R."/>
            <person name="Moya A."/>
        </authorList>
    </citation>
    <scope>NUCLEOTIDE SEQUENCE [LARGE SCALE GENOMIC DNA]</scope>
</reference>
<proteinExistence type="inferred from homology"/>
<sequence length="79" mass="9489">MSRTCQITRKKPMNGNKRSHAMNATKRWFIPNIHSHRFWIENKKKFIKLRISTKGIRLVDKLGIEQFLSIVSFKNKKNY</sequence>
<gene>
    <name evidence="1" type="primary">rpmB</name>
    <name type="ordered locus">Bfl612</name>
</gene>
<keyword id="KW-1185">Reference proteome</keyword>
<keyword id="KW-0687">Ribonucleoprotein</keyword>
<keyword id="KW-0689">Ribosomal protein</keyword>